<keyword id="KW-1035">Host cytoplasm</keyword>
<keyword id="KW-0945">Host-virus interaction</keyword>
<keyword id="KW-0479">Metal-binding</keyword>
<keyword id="KW-1119">Modulation of host cell apoptosis by virus</keyword>
<keyword id="KW-1128">Modulation of host ubiquitin pathway by viral E3 ligase</keyword>
<keyword id="KW-1130">Modulation of host ubiquitin pathway by virus</keyword>
<keyword id="KW-0808">Transferase</keyword>
<keyword id="KW-0833">Ubl conjugation pathway</keyword>
<keyword id="KW-0862">Zinc</keyword>
<keyword id="KW-0863">Zinc-finger</keyword>
<dbReference type="EC" id="2.3.2.27"/>
<dbReference type="EMBL" id="AY678275">
    <property type="protein sequence ID" value="AAW23401.1"/>
    <property type="molecule type" value="Genomic_DNA"/>
</dbReference>
<dbReference type="Proteomes" id="UP000173158">
    <property type="component" value="Segment"/>
</dbReference>
<dbReference type="GO" id="GO:0030430">
    <property type="term" value="C:host cell cytoplasm"/>
    <property type="evidence" value="ECO:0007669"/>
    <property type="project" value="UniProtKB-SubCell"/>
</dbReference>
<dbReference type="GO" id="GO:0016881">
    <property type="term" value="F:acid-amino acid ligase activity"/>
    <property type="evidence" value="ECO:0007669"/>
    <property type="project" value="InterPro"/>
</dbReference>
<dbReference type="GO" id="GO:0061630">
    <property type="term" value="F:ubiquitin protein ligase activity"/>
    <property type="evidence" value="ECO:0007669"/>
    <property type="project" value="InterPro"/>
</dbReference>
<dbReference type="GO" id="GO:0008270">
    <property type="term" value="F:zinc ion binding"/>
    <property type="evidence" value="ECO:0007669"/>
    <property type="project" value="UniProtKB-KW"/>
</dbReference>
<dbReference type="GO" id="GO:0000209">
    <property type="term" value="P:protein polyubiquitination"/>
    <property type="evidence" value="ECO:0007669"/>
    <property type="project" value="InterPro"/>
</dbReference>
<dbReference type="GO" id="GO:0052150">
    <property type="term" value="P:symbiont-mediated perturbation of host apoptosis"/>
    <property type="evidence" value="ECO:0007669"/>
    <property type="project" value="UniProtKB-KW"/>
</dbReference>
<dbReference type="GO" id="GO:0039648">
    <property type="term" value="P:symbiont-mediated perturbation of host ubiquitin-like protein modification"/>
    <property type="evidence" value="ECO:0007669"/>
    <property type="project" value="UniProtKB-KW"/>
</dbReference>
<dbReference type="Gene3D" id="3.30.40.10">
    <property type="entry name" value="Zinc/RING finger domain, C3HC4 (zinc finger)"/>
    <property type="match status" value="1"/>
</dbReference>
<dbReference type="InterPro" id="IPR016398">
    <property type="entry name" value="E3_ubiquitin-prot_ligase_p28"/>
</dbReference>
<dbReference type="InterPro" id="IPR018004">
    <property type="entry name" value="KilA/APSES_HTH"/>
</dbReference>
<dbReference type="InterPro" id="IPR017880">
    <property type="entry name" value="KilA_N"/>
</dbReference>
<dbReference type="InterPro" id="IPR045072">
    <property type="entry name" value="MKRN-like"/>
</dbReference>
<dbReference type="InterPro" id="IPR001841">
    <property type="entry name" value="Znf_RING"/>
</dbReference>
<dbReference type="InterPro" id="IPR013083">
    <property type="entry name" value="Znf_RING/FYVE/PHD"/>
</dbReference>
<dbReference type="InterPro" id="IPR017907">
    <property type="entry name" value="Znf_RING_CS"/>
</dbReference>
<dbReference type="PANTHER" id="PTHR11224:SF10">
    <property type="entry name" value="IP09428P-RELATED"/>
    <property type="match status" value="1"/>
</dbReference>
<dbReference type="PANTHER" id="PTHR11224">
    <property type="entry name" value="MAKORIN-RELATED"/>
    <property type="match status" value="1"/>
</dbReference>
<dbReference type="Pfam" id="PF04383">
    <property type="entry name" value="KilA-N"/>
    <property type="match status" value="1"/>
</dbReference>
<dbReference type="Pfam" id="PF13639">
    <property type="entry name" value="zf-RING_2"/>
    <property type="match status" value="1"/>
</dbReference>
<dbReference type="PIRSF" id="PIRSF003775">
    <property type="entry name" value="E3_ubiquit_lig_p28"/>
    <property type="match status" value="1"/>
</dbReference>
<dbReference type="SMART" id="SM00184">
    <property type="entry name" value="RING"/>
    <property type="match status" value="1"/>
</dbReference>
<dbReference type="SUPFAM" id="SSF57850">
    <property type="entry name" value="RING/U-box"/>
    <property type="match status" value="1"/>
</dbReference>
<dbReference type="PROSITE" id="PS51301">
    <property type="entry name" value="KILA_N"/>
    <property type="match status" value="1"/>
</dbReference>
<dbReference type="PROSITE" id="PS00518">
    <property type="entry name" value="ZF_RING_1"/>
    <property type="match status" value="1"/>
</dbReference>
<dbReference type="PROSITE" id="PS50089">
    <property type="entry name" value="ZF_RING_2"/>
    <property type="match status" value="1"/>
</dbReference>
<name>PG021_VACC8</name>
<accession>P0C775</accession>
<reference key="1">
    <citation type="journal article" date="2005" name="J. Virol.">
        <title>An attenuated LC16m8 smallpox vaccine: analysis of full-genome sequence and induction of immune protection.</title>
        <authorList>
            <person name="Morikawa S."/>
            <person name="Sakiyama T."/>
            <person name="Hasegawa H."/>
            <person name="Saijo M."/>
            <person name="Maeda A."/>
            <person name="Kurane I."/>
            <person name="Maeno G."/>
            <person name="Kimura J."/>
            <person name="Hirama C."/>
            <person name="Yoshida T."/>
            <person name="Asahi-Ozaki Y."/>
            <person name="Sata T."/>
            <person name="Kurata T."/>
            <person name="Kojima A."/>
        </authorList>
    </citation>
    <scope>NUCLEOTIDE SEQUENCE [LARGE SCALE GENOMIC DNA]</scope>
</reference>
<gene>
    <name type="primary">OPG021</name>
    <name type="synonym">p28</name>
    <name type="ORF">m8008R</name>
</gene>
<evidence type="ECO:0000250" key="1">
    <source>
        <dbReference type="UniProtKB" id="Q85318"/>
    </source>
</evidence>
<evidence type="ECO:0000255" key="2">
    <source>
        <dbReference type="PROSITE-ProRule" id="PRU00175"/>
    </source>
</evidence>
<evidence type="ECO:0000255" key="3">
    <source>
        <dbReference type="PROSITE-ProRule" id="PRU00631"/>
    </source>
</evidence>
<evidence type="ECO:0000305" key="4"/>
<comment type="function">
    <text evidence="1">RING-finger E3 ubiquitin ligase which catalyzes the formation of both 'Lys-48'- and 'Lys-63'-linked polyubiquitin chains. Plays an important role in virulence by acting as an anti-apoptotic factor.</text>
</comment>
<comment type="catalytic activity">
    <reaction>
        <text>S-ubiquitinyl-[E2 ubiquitin-conjugating enzyme]-L-cysteine + [acceptor protein]-L-lysine = [E2 ubiquitin-conjugating enzyme]-L-cysteine + N(6)-ubiquitinyl-[acceptor protein]-L-lysine.</text>
        <dbReference type="EC" id="2.3.2.27"/>
    </reaction>
</comment>
<comment type="subcellular location">
    <subcellularLocation>
        <location>Host cytoplasm</location>
    </subcellularLocation>
    <text evidence="1">Localizes to viral factories, the sites of virus replication.</text>
</comment>
<comment type="miscellaneous">
    <text>The vaccinia strains LC16m0 and LC16m8 encode a full-length E3 ubiquitin ligase p28 unlike the majority of the vaccinia strains.</text>
</comment>
<comment type="similarity">
    <text evidence="4">Belongs to the orthopoxvirus OPG021 family.</text>
</comment>
<organismHost>
    <name type="scientific">Homo sapiens</name>
    <name type="common">Human</name>
    <dbReference type="NCBI Taxonomy" id="9606"/>
</organismHost>
<feature type="chain" id="PRO_0000395992" description="Host range factor p28">
    <location>
        <begin position="1"/>
        <end position="239"/>
    </location>
</feature>
<feature type="domain" description="KilA-N" evidence="3">
    <location>
        <begin position="21"/>
        <end position="131"/>
    </location>
</feature>
<feature type="zinc finger region" description="RING-type" evidence="2">
    <location>
        <begin position="170"/>
        <end position="223"/>
    </location>
</feature>
<sequence>MEFDPAKINTSSIDHVTILQYIDEPNDIRLTVCIIRNINNITYYINITKINTHLANQFRAWKKRIAGRDYITNLSRDTGIQQSKLTETIRNCQKNRNIYGLYIHYNLVINVVIDWITDVIVQSILRGLVNWYIANNTYTPNNTTTISELDIIKILDKYEDVYRVSKEKECGICYEVVYSKRLENDRYFGLLDSCNHIFCITCINIWHKTRRETGASDNCPICRTRFRNITMSKFYKLVN</sequence>
<protein>
    <recommendedName>
        <fullName>Host range factor p28</fullName>
        <ecNumber>2.3.2.27</ecNumber>
    </recommendedName>
    <alternativeName>
        <fullName>E3 ubiquitin-protein ligase p28</fullName>
    </alternativeName>
</protein>
<organism>
    <name type="scientific">Vaccinia virus (strain LC16m8)</name>
    <name type="common">VACV</name>
    <dbReference type="NCBI Taxonomy" id="10248"/>
    <lineage>
        <taxon>Viruses</taxon>
        <taxon>Varidnaviria</taxon>
        <taxon>Bamfordvirae</taxon>
        <taxon>Nucleocytoviricota</taxon>
        <taxon>Pokkesviricetes</taxon>
        <taxon>Chitovirales</taxon>
        <taxon>Poxviridae</taxon>
        <taxon>Chordopoxvirinae</taxon>
        <taxon>Orthopoxvirus</taxon>
        <taxon>Vaccinia virus</taxon>
    </lineage>
</organism>
<proteinExistence type="inferred from homology"/>